<gene>
    <name evidence="1" type="primary">asnA</name>
    <name type="ordered locus">PEPE_1469</name>
</gene>
<proteinExistence type="inferred from homology"/>
<name>ASNA_PEDPA</name>
<keyword id="KW-0028">Amino-acid biosynthesis</keyword>
<keyword id="KW-0061">Asparagine biosynthesis</keyword>
<keyword id="KW-0067">ATP-binding</keyword>
<keyword id="KW-0963">Cytoplasm</keyword>
<keyword id="KW-0436">Ligase</keyword>
<keyword id="KW-0547">Nucleotide-binding</keyword>
<organism>
    <name type="scientific">Pediococcus pentosaceus (strain ATCC 25745 / CCUG 21536 / LMG 10740 / 183-1w)</name>
    <dbReference type="NCBI Taxonomy" id="278197"/>
    <lineage>
        <taxon>Bacteria</taxon>
        <taxon>Bacillati</taxon>
        <taxon>Bacillota</taxon>
        <taxon>Bacilli</taxon>
        <taxon>Lactobacillales</taxon>
        <taxon>Lactobacillaceae</taxon>
        <taxon>Pediococcus</taxon>
    </lineage>
</organism>
<dbReference type="EC" id="6.3.1.1" evidence="1"/>
<dbReference type="EMBL" id="CP000422">
    <property type="protein sequence ID" value="ABJ68500.1"/>
    <property type="molecule type" value="Genomic_DNA"/>
</dbReference>
<dbReference type="RefSeq" id="WP_011673686.1">
    <property type="nucleotide sequence ID" value="NC_008525.1"/>
</dbReference>
<dbReference type="SMR" id="Q03E72"/>
<dbReference type="STRING" id="278197.PEPE_1469"/>
<dbReference type="GeneID" id="33062025"/>
<dbReference type="KEGG" id="ppe:PEPE_1469"/>
<dbReference type="eggNOG" id="COG2502">
    <property type="taxonomic scope" value="Bacteria"/>
</dbReference>
<dbReference type="HOGENOM" id="CLU_071543_0_0_9"/>
<dbReference type="OrthoDB" id="9766088at2"/>
<dbReference type="UniPathway" id="UPA00134">
    <property type="reaction ID" value="UER00194"/>
</dbReference>
<dbReference type="Proteomes" id="UP000000773">
    <property type="component" value="Chromosome"/>
</dbReference>
<dbReference type="GO" id="GO:0005829">
    <property type="term" value="C:cytosol"/>
    <property type="evidence" value="ECO:0007669"/>
    <property type="project" value="TreeGrafter"/>
</dbReference>
<dbReference type="GO" id="GO:0004071">
    <property type="term" value="F:aspartate-ammonia ligase activity"/>
    <property type="evidence" value="ECO:0007669"/>
    <property type="project" value="UniProtKB-UniRule"/>
</dbReference>
<dbReference type="GO" id="GO:0005524">
    <property type="term" value="F:ATP binding"/>
    <property type="evidence" value="ECO:0007669"/>
    <property type="project" value="UniProtKB-UniRule"/>
</dbReference>
<dbReference type="GO" id="GO:0140096">
    <property type="term" value="F:catalytic activity, acting on a protein"/>
    <property type="evidence" value="ECO:0007669"/>
    <property type="project" value="UniProtKB-ARBA"/>
</dbReference>
<dbReference type="GO" id="GO:0016740">
    <property type="term" value="F:transferase activity"/>
    <property type="evidence" value="ECO:0007669"/>
    <property type="project" value="UniProtKB-ARBA"/>
</dbReference>
<dbReference type="GO" id="GO:0070981">
    <property type="term" value="P:L-asparagine biosynthetic process"/>
    <property type="evidence" value="ECO:0007669"/>
    <property type="project" value="UniProtKB-UniRule"/>
</dbReference>
<dbReference type="CDD" id="cd00645">
    <property type="entry name" value="AsnA"/>
    <property type="match status" value="1"/>
</dbReference>
<dbReference type="Gene3D" id="3.30.930.10">
    <property type="entry name" value="Bira Bifunctional Protein, Domain 2"/>
    <property type="match status" value="1"/>
</dbReference>
<dbReference type="HAMAP" id="MF_00555">
    <property type="entry name" value="AsnA"/>
    <property type="match status" value="1"/>
</dbReference>
<dbReference type="InterPro" id="IPR006195">
    <property type="entry name" value="aa-tRNA-synth_II"/>
</dbReference>
<dbReference type="InterPro" id="IPR045864">
    <property type="entry name" value="aa-tRNA-synth_II/BPL/LPL"/>
</dbReference>
<dbReference type="InterPro" id="IPR004618">
    <property type="entry name" value="AsnA"/>
</dbReference>
<dbReference type="NCBIfam" id="TIGR00669">
    <property type="entry name" value="asnA"/>
    <property type="match status" value="1"/>
</dbReference>
<dbReference type="PANTHER" id="PTHR30073">
    <property type="entry name" value="ASPARTATE--AMMONIA LIGASE"/>
    <property type="match status" value="1"/>
</dbReference>
<dbReference type="PANTHER" id="PTHR30073:SF5">
    <property type="entry name" value="ASPARTATE--AMMONIA LIGASE"/>
    <property type="match status" value="1"/>
</dbReference>
<dbReference type="Pfam" id="PF03590">
    <property type="entry name" value="AsnA"/>
    <property type="match status" value="1"/>
</dbReference>
<dbReference type="PIRSF" id="PIRSF001555">
    <property type="entry name" value="Asp_ammon_ligase"/>
    <property type="match status" value="1"/>
</dbReference>
<dbReference type="SUPFAM" id="SSF55681">
    <property type="entry name" value="Class II aaRS and biotin synthetases"/>
    <property type="match status" value="1"/>
</dbReference>
<dbReference type="PROSITE" id="PS50862">
    <property type="entry name" value="AA_TRNA_LIGASE_II"/>
    <property type="match status" value="1"/>
</dbReference>
<sequence>MDLIIPASYDPKLSVRQTQEAIRYIRETFQDEFGKELNLSRLSAPMFVPSATGLNDNLNGVETPVSFSMQDMPETSIEIVHSLAKWKRVALKRFDFEMHSGLYTNMNAIRKDEDLDNIHSIYVDQWDWEKVIDQSERNLTTLKETVQTIFKVIKHMEHEVWYKYPEAVYHLPDQIHFVTTQELEDRFPKLTPKEREDAICKELGCVFLMQIGGTLKSGERHDGRAPDYDDWQLNGDILFWYEPLQKALEISSMGIRVSEESMLKQLKIANAEDRIHLPYHQMLLNHQLPYTIGGGIGQSRLCMLLLGKAHVGEVQASVWPQSMIDQCEENQIHIL</sequence>
<comment type="catalytic activity">
    <reaction evidence="1">
        <text>L-aspartate + NH4(+) + ATP = L-asparagine + AMP + diphosphate + H(+)</text>
        <dbReference type="Rhea" id="RHEA:11372"/>
        <dbReference type="ChEBI" id="CHEBI:15378"/>
        <dbReference type="ChEBI" id="CHEBI:28938"/>
        <dbReference type="ChEBI" id="CHEBI:29991"/>
        <dbReference type="ChEBI" id="CHEBI:30616"/>
        <dbReference type="ChEBI" id="CHEBI:33019"/>
        <dbReference type="ChEBI" id="CHEBI:58048"/>
        <dbReference type="ChEBI" id="CHEBI:456215"/>
        <dbReference type="EC" id="6.3.1.1"/>
    </reaction>
</comment>
<comment type="pathway">
    <text evidence="1">Amino-acid biosynthesis; L-asparagine biosynthesis; L-asparagine from L-aspartate (ammonia route): step 1/1.</text>
</comment>
<comment type="subcellular location">
    <subcellularLocation>
        <location evidence="1">Cytoplasm</location>
    </subcellularLocation>
</comment>
<comment type="similarity">
    <text evidence="1">Belongs to the class-II aminoacyl-tRNA synthetase family. AsnA subfamily.</text>
</comment>
<evidence type="ECO:0000255" key="1">
    <source>
        <dbReference type="HAMAP-Rule" id="MF_00555"/>
    </source>
</evidence>
<accession>Q03E72</accession>
<protein>
    <recommendedName>
        <fullName evidence="1">Aspartate--ammonia ligase</fullName>
        <ecNumber evidence="1">6.3.1.1</ecNumber>
    </recommendedName>
    <alternativeName>
        <fullName evidence="1">Asparagine synthetase A</fullName>
    </alternativeName>
</protein>
<reference key="1">
    <citation type="journal article" date="2006" name="Proc. Natl. Acad. Sci. U.S.A.">
        <title>Comparative genomics of the lactic acid bacteria.</title>
        <authorList>
            <person name="Makarova K.S."/>
            <person name="Slesarev A."/>
            <person name="Wolf Y.I."/>
            <person name="Sorokin A."/>
            <person name="Mirkin B."/>
            <person name="Koonin E.V."/>
            <person name="Pavlov A."/>
            <person name="Pavlova N."/>
            <person name="Karamychev V."/>
            <person name="Polouchine N."/>
            <person name="Shakhova V."/>
            <person name="Grigoriev I."/>
            <person name="Lou Y."/>
            <person name="Rohksar D."/>
            <person name="Lucas S."/>
            <person name="Huang K."/>
            <person name="Goodstein D.M."/>
            <person name="Hawkins T."/>
            <person name="Plengvidhya V."/>
            <person name="Welker D."/>
            <person name="Hughes J."/>
            <person name="Goh Y."/>
            <person name="Benson A."/>
            <person name="Baldwin K."/>
            <person name="Lee J.-H."/>
            <person name="Diaz-Muniz I."/>
            <person name="Dosti B."/>
            <person name="Smeianov V."/>
            <person name="Wechter W."/>
            <person name="Barabote R."/>
            <person name="Lorca G."/>
            <person name="Altermann E."/>
            <person name="Barrangou R."/>
            <person name="Ganesan B."/>
            <person name="Xie Y."/>
            <person name="Rawsthorne H."/>
            <person name="Tamir D."/>
            <person name="Parker C."/>
            <person name="Breidt F."/>
            <person name="Broadbent J.R."/>
            <person name="Hutkins R."/>
            <person name="O'Sullivan D."/>
            <person name="Steele J."/>
            <person name="Unlu G."/>
            <person name="Saier M.H. Jr."/>
            <person name="Klaenhammer T."/>
            <person name="Richardson P."/>
            <person name="Kozyavkin S."/>
            <person name="Weimer B.C."/>
            <person name="Mills D.A."/>
        </authorList>
    </citation>
    <scope>NUCLEOTIDE SEQUENCE [LARGE SCALE GENOMIC DNA]</scope>
    <source>
        <strain>ATCC 25745 / CCUG 21536 / LMG 10740 / 183-1w</strain>
    </source>
</reference>
<feature type="chain" id="PRO_1000017956" description="Aspartate--ammonia ligase">
    <location>
        <begin position="1"/>
        <end position="335"/>
    </location>
</feature>